<accession>P10503</accession>
<sequence length="1320" mass="144090">MGTTTMGVKLDDATRERIKMAASRIDRTPHWLIKQAIFSYLDKLENSDTLPELPALFVGAANESEEPVAPQDEPHQPFLEFAEQILPQSVSRAAITAAWRRPETDAVSMLMEQARLSPPVAEQAHKLAYQLAEKLRNQKSASGRAGMVQGLLQEFSLSSQEGVALMCLAEALLRIPDKATRDALIRDKISNGNWQSHIGRSPSLFVNAATWGLLFTGRLVSTHNEANLSRSLNRIIGKSGEPLIRKGVDMAMRLMGEQFVTGETIAQALANARKLEEKGFRYSYDMLGEAALTAADAQAYMVSYQQAIHAIGKASNGRGIYEGPGISIKLSALHPRYSRAQYDRVMEELYPRLKSLTLLARQYDIGLNIDAEEADRLEISLDLLEKLCFEPELAGWNGIGFVIQAYQKRCPLVIDYLVDLASRSRRRLMIRLVKGAYWDSEIKRAQMEGLEGYPVYTRKVYTDVSYLACAKKLLAVPNLIYPQFATHNAHTLAAIYHLAGQNYYPGQYEFQCLHGMGEPLYEQVTGKVADGKLNRPCRIYAPVGTHETLLAYLVRRLLENGANTSFVNRIADATLPLDELVADPVEAVEKLAQQEGQAGIPHPKIPLPRDLYGEGRINSAGLDLANEHRLASLSSALLSNAMQKWQAKPVLEQPVADGEMTPVINPAEPKDIVGWGREATESEVEQALQNAVNQAPVWFATPPQERAAILQRAAVLMEDQMQQLIGLLVREAGKTFSNAIAEVREAVDFLHYYAGQVRDDFDNETHRPLGPVVCISPWNFPLAIFTGQIAAALAAGNSVLAKPAEQTSLIAAQGIAILLEAGVPPGVVQLLPGRGETVGAQLTADARVRGVMFTGSTEVATLLQRNIATRLDAQGRPIPLIAETGGMNAMIVDSSALTEQVVVDVLASAFDSAGQRCSALRVLCLQDDIAEHTLKMLRGAMAECRMGNPGRLTTDIGPVIDSEAKANIERHIQTMRAKGRPVFQAARENSDDAQEWQTGTFVMPTLIELENFAELEKEVFGPVLHVVRYNRNQLAELIEQINASGYGLTLGVHTRIDETIAQVTGSAHVGNLYVNRNMVGAVVGVQPFGGEGLSGTGPKAGGPLYLYRLLAHRPPNALNTTLTRQDARYPVDAQLKTTLLAPLTALTQWAADRPALQTLCRQFADLAQAGTQRLLPGPTGERNTWTLLPRERVLCLADDEQDALTQLAAVLAVGSQALWSDDAFHRDLAKRLPAAVAARVQFAKAETLMAQPFDAVIFHGDSDKLRTVCEAVAAREGAIVSVQGFARGESNILLERLYIERSLSVNTAAAGGNASLMTIG</sequence>
<dbReference type="EC" id="1.5.5.2"/>
<dbReference type="EC" id="1.2.1.88"/>
<dbReference type="EMBL" id="X70843">
    <property type="protein sequence ID" value="CAA50193.1"/>
    <property type="molecule type" value="Genomic_DNA"/>
</dbReference>
<dbReference type="EMBL" id="AE006468">
    <property type="protein sequence ID" value="AAL20055.1"/>
    <property type="status" value="ALT_FRAME"/>
    <property type="molecule type" value="Genomic_DNA"/>
</dbReference>
<dbReference type="EMBL" id="X12569">
    <property type="protein sequence ID" value="CAA31081.1"/>
    <property type="status" value="ALT_SEQ"/>
    <property type="molecule type" value="Genomic_DNA"/>
</dbReference>
<dbReference type="PIR" id="S66279">
    <property type="entry name" value="S66279"/>
</dbReference>
<dbReference type="RefSeq" id="NP_447555.1">
    <property type="nucleotide sequence ID" value="NC_003197.2"/>
</dbReference>
<dbReference type="RefSeq" id="WP_000537528.1">
    <property type="nucleotide sequence ID" value="NC_003197.2"/>
</dbReference>
<dbReference type="SMR" id="P10503"/>
<dbReference type="STRING" id="99287.STM1124"/>
<dbReference type="MoonProt" id="P10503"/>
<dbReference type="PaxDb" id="99287-STM1124"/>
<dbReference type="GeneID" id="2673752"/>
<dbReference type="KEGG" id="stm:STM1124"/>
<dbReference type="HOGENOM" id="CLU_005682_1_0_6"/>
<dbReference type="PhylomeDB" id="P10503"/>
<dbReference type="BioCyc" id="MetaCyc:STM1124-MONOMER"/>
<dbReference type="BioCyc" id="SENT99287:STM1124-MONOMER"/>
<dbReference type="UniPathway" id="UPA00261">
    <property type="reaction ID" value="UER00373"/>
</dbReference>
<dbReference type="UniPathway" id="UPA00261">
    <property type="reaction ID" value="UER00374"/>
</dbReference>
<dbReference type="Proteomes" id="UP000001014">
    <property type="component" value="Chromosome"/>
</dbReference>
<dbReference type="GO" id="GO:0098562">
    <property type="term" value="C:cytoplasmic side of membrane"/>
    <property type="evidence" value="ECO:0000314"/>
    <property type="project" value="UniProtKB"/>
</dbReference>
<dbReference type="GO" id="GO:0009898">
    <property type="term" value="C:cytoplasmic side of plasma membrane"/>
    <property type="evidence" value="ECO:0000318"/>
    <property type="project" value="GO_Central"/>
</dbReference>
<dbReference type="GO" id="GO:0003842">
    <property type="term" value="F:1-pyrroline-5-carboxylate dehydrogenase activity"/>
    <property type="evidence" value="ECO:0000315"/>
    <property type="project" value="UniProtKB"/>
</dbReference>
<dbReference type="GO" id="GO:0001046">
    <property type="term" value="F:core promoter sequence-specific DNA binding"/>
    <property type="evidence" value="ECO:0000314"/>
    <property type="project" value="UniProtKB"/>
</dbReference>
<dbReference type="GO" id="GO:0001217">
    <property type="term" value="F:DNA-binding transcription repressor activity"/>
    <property type="evidence" value="ECO:0000315"/>
    <property type="project" value="UniProtKB"/>
</dbReference>
<dbReference type="GO" id="GO:0098531">
    <property type="term" value="F:ligand-modulated transcription factor activity"/>
    <property type="evidence" value="ECO:0000314"/>
    <property type="project" value="UniProtKB"/>
</dbReference>
<dbReference type="GO" id="GO:1901973">
    <property type="term" value="F:proline binding"/>
    <property type="evidence" value="ECO:0000315"/>
    <property type="project" value="UniProtKB"/>
</dbReference>
<dbReference type="GO" id="GO:0004657">
    <property type="term" value="F:proline dehydrogenase activity"/>
    <property type="evidence" value="ECO:0000314"/>
    <property type="project" value="UniProtKB"/>
</dbReference>
<dbReference type="GO" id="GO:0043565">
    <property type="term" value="F:sequence-specific DNA binding"/>
    <property type="evidence" value="ECO:0000314"/>
    <property type="project" value="UniProtKB"/>
</dbReference>
<dbReference type="GO" id="GO:0071235">
    <property type="term" value="P:cellular response to proline"/>
    <property type="evidence" value="ECO:0000314"/>
    <property type="project" value="UniProtKB"/>
</dbReference>
<dbReference type="GO" id="GO:0045892">
    <property type="term" value="P:negative regulation of DNA-templated transcription"/>
    <property type="evidence" value="ECO:0000314"/>
    <property type="project" value="UniProtKB"/>
</dbReference>
<dbReference type="GO" id="GO:0006561">
    <property type="term" value="P:proline biosynthetic process"/>
    <property type="evidence" value="ECO:0007669"/>
    <property type="project" value="InterPro"/>
</dbReference>
<dbReference type="GO" id="GO:0006562">
    <property type="term" value="P:proline catabolic process"/>
    <property type="evidence" value="ECO:0000314"/>
    <property type="project" value="UniProtKB"/>
</dbReference>
<dbReference type="GO" id="GO:0010133">
    <property type="term" value="P:proline catabolic process to glutamate"/>
    <property type="evidence" value="ECO:0000314"/>
    <property type="project" value="UniProtKB"/>
</dbReference>
<dbReference type="GO" id="GO:0010238">
    <property type="term" value="P:response to proline"/>
    <property type="evidence" value="ECO:0000314"/>
    <property type="project" value="UniProtKB"/>
</dbReference>
<dbReference type="CDD" id="cd07125">
    <property type="entry name" value="ALDH_PutA-P5CDH"/>
    <property type="match status" value="1"/>
</dbReference>
<dbReference type="CDD" id="cd22233">
    <property type="entry name" value="RHH_CopAso-like"/>
    <property type="match status" value="1"/>
</dbReference>
<dbReference type="FunFam" id="3.40.309.10:FF:000005">
    <property type="entry name" value="1-pyrroline-5-carboxylate dehydrogenase 1"/>
    <property type="match status" value="1"/>
</dbReference>
<dbReference type="FunFam" id="1.20.5.460:FF:000001">
    <property type="entry name" value="Bifunctional protein PutA"/>
    <property type="match status" value="1"/>
</dbReference>
<dbReference type="FunFam" id="1.20.5.550:FF:000001">
    <property type="entry name" value="Bifunctional protein PutA"/>
    <property type="match status" value="1"/>
</dbReference>
<dbReference type="FunFam" id="3.20.20.220:FF:000004">
    <property type="entry name" value="Bifunctional protein PutA"/>
    <property type="match status" value="1"/>
</dbReference>
<dbReference type="FunFam" id="3.40.605.10:FF:000017">
    <property type="entry name" value="Bifunctional protein PutA"/>
    <property type="match status" value="1"/>
</dbReference>
<dbReference type="Gene3D" id="3.20.20.220">
    <property type="match status" value="1"/>
</dbReference>
<dbReference type="Gene3D" id="3.40.605.10">
    <property type="entry name" value="Aldehyde Dehydrogenase, Chain A, domain 1"/>
    <property type="match status" value="1"/>
</dbReference>
<dbReference type="Gene3D" id="3.40.309.10">
    <property type="entry name" value="Aldehyde Dehydrogenase, Chain A, domain 2"/>
    <property type="match status" value="1"/>
</dbReference>
<dbReference type="Gene3D" id="1.10.1220.10">
    <property type="entry name" value="Met repressor-like"/>
    <property type="match status" value="1"/>
</dbReference>
<dbReference type="Gene3D" id="1.20.5.550">
    <property type="entry name" value="Single Helix bin"/>
    <property type="match status" value="1"/>
</dbReference>
<dbReference type="Gene3D" id="1.20.5.460">
    <property type="entry name" value="Single helix bin"/>
    <property type="match status" value="1"/>
</dbReference>
<dbReference type="InterPro" id="IPR016161">
    <property type="entry name" value="Ald_DH/histidinol_DH"/>
</dbReference>
<dbReference type="InterPro" id="IPR016163">
    <property type="entry name" value="Ald_DH_C"/>
</dbReference>
<dbReference type="InterPro" id="IPR016160">
    <property type="entry name" value="Ald_DH_CS_CYS"/>
</dbReference>
<dbReference type="InterPro" id="IPR029510">
    <property type="entry name" value="Ald_DH_CS_GLU"/>
</dbReference>
<dbReference type="InterPro" id="IPR016162">
    <property type="entry name" value="Ald_DH_N"/>
</dbReference>
<dbReference type="InterPro" id="IPR015590">
    <property type="entry name" value="Aldehyde_DH_dom"/>
</dbReference>
<dbReference type="InterPro" id="IPR013321">
    <property type="entry name" value="Arc_rbn_hlx_hlx"/>
</dbReference>
<dbReference type="InterPro" id="IPR025703">
    <property type="entry name" value="Bifunct_PutA"/>
</dbReference>
<dbReference type="InterPro" id="IPR029041">
    <property type="entry name" value="FAD-linked_oxidoreductase-like"/>
</dbReference>
<dbReference type="InterPro" id="IPR041349">
    <property type="entry name" value="PRODH"/>
</dbReference>
<dbReference type="InterPro" id="IPR024090">
    <property type="entry name" value="PRODH_PutA_dom_I"/>
</dbReference>
<dbReference type="InterPro" id="IPR024089">
    <property type="entry name" value="PRODH_PutA_dom_I/II"/>
</dbReference>
<dbReference type="InterPro" id="IPR024082">
    <property type="entry name" value="PRODH_PutA_dom_II"/>
</dbReference>
<dbReference type="InterPro" id="IPR002872">
    <property type="entry name" value="Proline_DH_dom"/>
</dbReference>
<dbReference type="InterPro" id="IPR050485">
    <property type="entry name" value="Proline_metab_enzyme"/>
</dbReference>
<dbReference type="InterPro" id="IPR005933">
    <property type="entry name" value="PutA_C"/>
</dbReference>
<dbReference type="InterPro" id="IPR048798">
    <property type="entry name" value="PutA_RHH"/>
</dbReference>
<dbReference type="InterPro" id="IPR010985">
    <property type="entry name" value="Ribbon_hlx_hlx"/>
</dbReference>
<dbReference type="NCBIfam" id="TIGR01238">
    <property type="entry name" value="D1pyr5carbox3"/>
    <property type="match status" value="1"/>
</dbReference>
<dbReference type="NCBIfam" id="NF008772">
    <property type="entry name" value="PRK11809.1"/>
    <property type="match status" value="1"/>
</dbReference>
<dbReference type="NCBIfam" id="NF008869">
    <property type="entry name" value="PRK11904.1"/>
    <property type="match status" value="1"/>
</dbReference>
<dbReference type="PANTHER" id="PTHR42862">
    <property type="entry name" value="DELTA-1-PYRROLINE-5-CARBOXYLATE DEHYDROGENASE 1, ISOFORM A-RELATED"/>
    <property type="match status" value="1"/>
</dbReference>
<dbReference type="PANTHER" id="PTHR42862:SF1">
    <property type="entry name" value="DELTA-1-PYRROLINE-5-CARBOXYLATE DEHYDROGENASE 2, ISOFORM A-RELATED"/>
    <property type="match status" value="1"/>
</dbReference>
<dbReference type="Pfam" id="PF00171">
    <property type="entry name" value="Aldedh"/>
    <property type="match status" value="1"/>
</dbReference>
<dbReference type="Pfam" id="PF01619">
    <property type="entry name" value="Pro_dh"/>
    <property type="match status" value="1"/>
</dbReference>
<dbReference type="Pfam" id="PF14850">
    <property type="entry name" value="Pro_dh-DNA_bdg"/>
    <property type="match status" value="1"/>
</dbReference>
<dbReference type="Pfam" id="PF18327">
    <property type="entry name" value="PRODH"/>
    <property type="match status" value="1"/>
</dbReference>
<dbReference type="Pfam" id="PF21775">
    <property type="entry name" value="PutA_1st"/>
    <property type="match status" value="1"/>
</dbReference>
<dbReference type="PIRSF" id="PIRSF000197">
    <property type="entry name" value="Bifunct_PutA"/>
    <property type="match status" value="1"/>
</dbReference>
<dbReference type="SUPFAM" id="SSF53720">
    <property type="entry name" value="ALDH-like"/>
    <property type="match status" value="1"/>
</dbReference>
<dbReference type="SUPFAM" id="SSF51730">
    <property type="entry name" value="FAD-linked oxidoreductase"/>
    <property type="match status" value="1"/>
</dbReference>
<dbReference type="SUPFAM" id="SSF81935">
    <property type="entry name" value="N-terminal domain of bifunctional PutA protein"/>
    <property type="match status" value="1"/>
</dbReference>
<dbReference type="SUPFAM" id="SSF47598">
    <property type="entry name" value="Ribbon-helix-helix"/>
    <property type="match status" value="1"/>
</dbReference>
<dbReference type="PROSITE" id="PS00070">
    <property type="entry name" value="ALDEHYDE_DEHYDR_CYS"/>
    <property type="match status" value="1"/>
</dbReference>
<dbReference type="PROSITE" id="PS00687">
    <property type="entry name" value="ALDEHYDE_DEHYDR_GLU"/>
    <property type="match status" value="1"/>
</dbReference>
<proteinExistence type="evidence at transcript level"/>
<evidence type="ECO:0000250" key="1"/>
<evidence type="ECO:0000305" key="2"/>
<comment type="function">
    <text>Oxidizes proline to glutamate for use as a carbon and nitrogen source and also function as a transcriptional repressor of the put operon.</text>
</comment>
<comment type="catalytic activity">
    <reaction>
        <text>L-proline + a quinone = (S)-1-pyrroline-5-carboxylate + a quinol + H(+)</text>
        <dbReference type="Rhea" id="RHEA:23784"/>
        <dbReference type="ChEBI" id="CHEBI:15378"/>
        <dbReference type="ChEBI" id="CHEBI:17388"/>
        <dbReference type="ChEBI" id="CHEBI:24646"/>
        <dbReference type="ChEBI" id="CHEBI:60039"/>
        <dbReference type="ChEBI" id="CHEBI:132124"/>
        <dbReference type="EC" id="1.5.5.2"/>
    </reaction>
</comment>
<comment type="catalytic activity">
    <reaction>
        <text>L-glutamate 5-semialdehyde + NAD(+) + H2O = L-glutamate + NADH + 2 H(+)</text>
        <dbReference type="Rhea" id="RHEA:30235"/>
        <dbReference type="ChEBI" id="CHEBI:15377"/>
        <dbReference type="ChEBI" id="CHEBI:15378"/>
        <dbReference type="ChEBI" id="CHEBI:29985"/>
        <dbReference type="ChEBI" id="CHEBI:57540"/>
        <dbReference type="ChEBI" id="CHEBI:57945"/>
        <dbReference type="ChEBI" id="CHEBI:58066"/>
        <dbReference type="EC" id="1.2.1.88"/>
    </reaction>
</comment>
<comment type="cofactor">
    <cofactor>
        <name>FAD</name>
        <dbReference type="ChEBI" id="CHEBI:57692"/>
    </cofactor>
</comment>
<comment type="pathway">
    <text>Amino-acid degradation; L-proline degradation into L-glutamate; L-glutamate from L-proline: step 1/2.</text>
</comment>
<comment type="pathway">
    <text>Amino-acid degradation; L-proline degradation into L-glutamate; L-glutamate from L-proline: step 2/2.</text>
</comment>
<comment type="induction">
    <text>By proline, autorepression and catabolite repression, and is potentially nitrogen controlled.</text>
</comment>
<comment type="similarity">
    <text evidence="2">In the N-terminal section; belongs to the proline dehydrogenase family.</text>
</comment>
<comment type="similarity">
    <text evidence="2">In the C-terminal section; belongs to the aldehyde dehydrogenase family.</text>
</comment>
<comment type="sequence caution" evidence="2">
    <conflict type="frameshift">
        <sequence resource="EMBL-CDS" id="AAL20055"/>
    </conflict>
</comment>
<name>PUTA_SALTY</name>
<feature type="chain" id="PRO_0000056528" description="Bifunctional protein PutA">
    <location>
        <begin position="1"/>
        <end position="1320"/>
    </location>
</feature>
<feature type="region of interest" description="Proline dehydrogenase">
    <location>
        <begin position="228"/>
        <end position="574"/>
    </location>
</feature>
<feature type="region of interest" description="Aldehyde dehydrogenase">
    <location>
        <begin position="653"/>
        <end position="1119"/>
    </location>
</feature>
<feature type="active site" evidence="1">
    <location>
        <position position="883"/>
    </location>
</feature>
<feature type="active site" evidence="1">
    <location>
        <position position="917"/>
    </location>
</feature>
<feature type="sequence conflict" description="In Ref. 1; CAA50193." evidence="2" ref="1">
    <original>G</original>
    <variation>R</variation>
    <location>
        <position position="850"/>
    </location>
</feature>
<protein>
    <recommendedName>
        <fullName>Bifunctional protein PutA</fullName>
    </recommendedName>
    <domain>
        <recommendedName>
            <fullName>Proline dehydrogenase</fullName>
            <ecNumber>1.5.5.2</ecNumber>
        </recommendedName>
        <alternativeName>
            <fullName>Proline oxidase</fullName>
        </alternativeName>
    </domain>
    <domain>
        <recommendedName>
            <fullName>Delta-1-pyrroline-5-carboxylate dehydrogenase</fullName>
            <shortName>P5C dehydrogenase</shortName>
            <ecNumber>1.2.1.88</ecNumber>
        </recommendedName>
        <alternativeName>
            <fullName>L-glutamate gamma-semialdehyde dehydrogenase</fullName>
        </alternativeName>
    </domain>
</protein>
<gene>
    <name type="primary">putA</name>
    <name type="ordered locus">STM1124</name>
</gene>
<keyword id="KW-0238">DNA-binding</keyword>
<keyword id="KW-0274">FAD</keyword>
<keyword id="KW-0285">Flavoprotein</keyword>
<keyword id="KW-0511">Multifunctional enzyme</keyword>
<keyword id="KW-0520">NAD</keyword>
<keyword id="KW-0560">Oxidoreductase</keyword>
<keyword id="KW-0642">Proline metabolism</keyword>
<keyword id="KW-1185">Reference proteome</keyword>
<keyword id="KW-0678">Repressor</keyword>
<keyword id="KW-0804">Transcription</keyword>
<keyword id="KW-0805">Transcription regulation</keyword>
<organism>
    <name type="scientific">Salmonella typhimurium (strain LT2 / SGSC1412 / ATCC 700720)</name>
    <dbReference type="NCBI Taxonomy" id="99287"/>
    <lineage>
        <taxon>Bacteria</taxon>
        <taxon>Pseudomonadati</taxon>
        <taxon>Pseudomonadota</taxon>
        <taxon>Gammaproteobacteria</taxon>
        <taxon>Enterobacterales</taxon>
        <taxon>Enterobacteriaceae</taxon>
        <taxon>Salmonella</taxon>
    </lineage>
</organism>
<reference key="1">
    <citation type="journal article" date="1993" name="Nucleic Acids Res.">
        <title>DNA sequence of the putA gene from Salmonella typhimurium: a bifunctional membrane-associated dehydrogenase that binds DNA.</title>
        <authorList>
            <person name="Allen S.W."/>
            <person name="Senti-Willis A.E."/>
            <person name="Maloy S.R."/>
        </authorList>
    </citation>
    <scope>NUCLEOTIDE SEQUENCE [GENOMIC DNA]</scope>
</reference>
<reference key="2">
    <citation type="submission" date="1994-04" db="EMBL/GenBank/DDBJ databases">
        <authorList>
            <person name="Maloy S.R."/>
        </authorList>
    </citation>
    <scope>SEQUENCE REVISION</scope>
</reference>
<reference key="3">
    <citation type="journal article" date="2001" name="Nature">
        <title>Complete genome sequence of Salmonella enterica serovar Typhimurium LT2.</title>
        <authorList>
            <person name="McClelland M."/>
            <person name="Sanderson K.E."/>
            <person name="Spieth J."/>
            <person name="Clifton S.W."/>
            <person name="Latreille P."/>
            <person name="Courtney L."/>
            <person name="Porwollik S."/>
            <person name="Ali J."/>
            <person name="Dante M."/>
            <person name="Du F."/>
            <person name="Hou S."/>
            <person name="Layman D."/>
            <person name="Leonard S."/>
            <person name="Nguyen C."/>
            <person name="Scott K."/>
            <person name="Holmes A."/>
            <person name="Grewal N."/>
            <person name="Mulvaney E."/>
            <person name="Ryan E."/>
            <person name="Sun H."/>
            <person name="Florea L."/>
            <person name="Miller W."/>
            <person name="Stoneking T."/>
            <person name="Nhan M."/>
            <person name="Waterston R."/>
            <person name="Wilson R.K."/>
        </authorList>
    </citation>
    <scope>NUCLEOTIDE SEQUENCE [LARGE SCALE GENOMIC DNA]</scope>
    <source>
        <strain>LT2 / SGSC1412 / ATCC 700720</strain>
    </source>
</reference>
<reference key="4">
    <citation type="journal article" date="1988" name="Mol. Gen. Genet.">
        <title>Regulation of proline utilization in Salmonella typhimurium: molecular characterization of the put operon, and DNA sequence of the put control region.</title>
        <authorList>
            <person name="Hahn D.R."/>
            <person name="Myers R.S."/>
            <person name="Kent C.R."/>
            <person name="Maloy S.R."/>
        </authorList>
    </citation>
    <scope>NUCLEOTIDE SEQUENCE [GENOMIC DNA] OF 1-26</scope>
</reference>
<reference key="5">
    <citation type="journal article" date="1991" name="J. Bacteriol.">
        <title>Regulation of proline utilization in Salmonella typhimurium: a membrane-associated dehydrogenase binds DNA in vitro.</title>
        <authorList>
            <person name="Ostrovsky de Spicer P."/>
            <person name="O'Brien K."/>
            <person name="Maloy S."/>
        </authorList>
    </citation>
    <scope>NUCLEOTIDE SEQUENCE [GENOMIC DNA] OF 1-26</scope>
    <source>
        <strain>LT2</strain>
    </source>
</reference>